<proteinExistence type="inferred from homology"/>
<organism>
    <name type="scientific">Streptomyces coelicolor (strain ATCC BAA-471 / A3(2) / M145)</name>
    <dbReference type="NCBI Taxonomy" id="100226"/>
    <lineage>
        <taxon>Bacteria</taxon>
        <taxon>Bacillati</taxon>
        <taxon>Actinomycetota</taxon>
        <taxon>Actinomycetes</taxon>
        <taxon>Kitasatosporales</taxon>
        <taxon>Streptomycetaceae</taxon>
        <taxon>Streptomyces</taxon>
        <taxon>Streptomyces albidoflavus group</taxon>
    </lineage>
</organism>
<comment type="function">
    <text evidence="1">Converts 2C-methyl-D-erythritol 2,4-cyclodiphosphate (ME-2,4cPP) into 1-hydroxy-2-methyl-2-(E)-butenyl 4-diphosphate.</text>
</comment>
<comment type="catalytic activity">
    <reaction evidence="1">
        <text>(2E)-4-hydroxy-3-methylbut-2-enyl diphosphate + oxidized [flavodoxin] + H2O + 2 H(+) = 2-C-methyl-D-erythritol 2,4-cyclic diphosphate + reduced [flavodoxin]</text>
        <dbReference type="Rhea" id="RHEA:43604"/>
        <dbReference type="Rhea" id="RHEA-COMP:10622"/>
        <dbReference type="Rhea" id="RHEA-COMP:10623"/>
        <dbReference type="ChEBI" id="CHEBI:15377"/>
        <dbReference type="ChEBI" id="CHEBI:15378"/>
        <dbReference type="ChEBI" id="CHEBI:57618"/>
        <dbReference type="ChEBI" id="CHEBI:58210"/>
        <dbReference type="ChEBI" id="CHEBI:58483"/>
        <dbReference type="ChEBI" id="CHEBI:128753"/>
        <dbReference type="EC" id="1.17.7.3"/>
    </reaction>
</comment>
<comment type="cofactor">
    <cofactor evidence="1">
        <name>[4Fe-4S] cluster</name>
        <dbReference type="ChEBI" id="CHEBI:49883"/>
    </cofactor>
    <text evidence="1">Binds 1 [4Fe-4S] cluster.</text>
</comment>
<comment type="pathway">
    <text evidence="1">Isoprenoid biosynthesis; isopentenyl diphosphate biosynthesis via DXP pathway; isopentenyl diphosphate from 1-deoxy-D-xylulose 5-phosphate: step 5/6.</text>
</comment>
<comment type="similarity">
    <text evidence="1">Belongs to the IspG family.</text>
</comment>
<reference key="1">
    <citation type="journal article" date="2002" name="Nature">
        <title>Complete genome sequence of the model actinomycete Streptomyces coelicolor A3(2).</title>
        <authorList>
            <person name="Bentley S.D."/>
            <person name="Chater K.F."/>
            <person name="Cerdeno-Tarraga A.-M."/>
            <person name="Challis G.L."/>
            <person name="Thomson N.R."/>
            <person name="James K.D."/>
            <person name="Harris D.E."/>
            <person name="Quail M.A."/>
            <person name="Kieser H."/>
            <person name="Harper D."/>
            <person name="Bateman A."/>
            <person name="Brown S."/>
            <person name="Chandra G."/>
            <person name="Chen C.W."/>
            <person name="Collins M."/>
            <person name="Cronin A."/>
            <person name="Fraser A."/>
            <person name="Goble A."/>
            <person name="Hidalgo J."/>
            <person name="Hornsby T."/>
            <person name="Howarth S."/>
            <person name="Huang C.-H."/>
            <person name="Kieser T."/>
            <person name="Larke L."/>
            <person name="Murphy L.D."/>
            <person name="Oliver K."/>
            <person name="O'Neil S."/>
            <person name="Rabbinowitsch E."/>
            <person name="Rajandream M.A."/>
            <person name="Rutherford K.M."/>
            <person name="Rutter S."/>
            <person name="Seeger K."/>
            <person name="Saunders D."/>
            <person name="Sharp S."/>
            <person name="Squares R."/>
            <person name="Squares S."/>
            <person name="Taylor K."/>
            <person name="Warren T."/>
            <person name="Wietzorrek A."/>
            <person name="Woodward J.R."/>
            <person name="Barrell B.G."/>
            <person name="Parkhill J."/>
            <person name="Hopwood D.A."/>
        </authorList>
    </citation>
    <scope>NUCLEOTIDE SEQUENCE [LARGE SCALE GENOMIC DNA]</scope>
    <source>
        <strain>ATCC BAA-471 / A3(2) / M145</strain>
    </source>
</reference>
<reference key="2">
    <citation type="journal article" date="2004" name="ChemBioChem">
        <title>A proposed mechanism for the reductive ring opening of the cyclodiphosphate MEcPP, a crucial transformation in the new DXP/MEP pathway to isoprenoids based on modeling studies and feeding experiments.</title>
        <authorList>
            <person name="Brandt W."/>
            <person name="Dessoy M.A."/>
            <person name="Fulhorst M."/>
            <person name="Gao W."/>
            <person name="Zenk M.H."/>
            <person name="Wessjohann L.A."/>
        </authorList>
    </citation>
    <scope>3D-STRUCTURE MODELING OF 271-375</scope>
</reference>
<dbReference type="EC" id="1.17.7.3" evidence="1"/>
<dbReference type="EMBL" id="AL939129">
    <property type="protein sequence ID" value="CAB39700.1"/>
    <property type="molecule type" value="Genomic_DNA"/>
</dbReference>
<dbReference type="PIR" id="T35407">
    <property type="entry name" value="T35407"/>
</dbReference>
<dbReference type="RefSeq" id="NP_630839.1">
    <property type="nucleotide sequence ID" value="NC_003888.3"/>
</dbReference>
<dbReference type="RefSeq" id="WP_011031167.1">
    <property type="nucleotide sequence ID" value="NZ_VNID01000002.1"/>
</dbReference>
<dbReference type="SMR" id="Q9X7W2"/>
<dbReference type="FunCoup" id="Q9X7W2">
    <property type="interactions" value="58"/>
</dbReference>
<dbReference type="STRING" id="100226.gene:17764425"/>
<dbReference type="PaxDb" id="100226-SCO6767"/>
<dbReference type="KEGG" id="sco:SCO6767"/>
<dbReference type="PATRIC" id="fig|100226.15.peg.6876"/>
<dbReference type="eggNOG" id="COG0821">
    <property type="taxonomic scope" value="Bacteria"/>
</dbReference>
<dbReference type="HOGENOM" id="CLU_042258_0_0_11"/>
<dbReference type="InParanoid" id="Q9X7W2"/>
<dbReference type="OrthoDB" id="9803214at2"/>
<dbReference type="PhylomeDB" id="Q9X7W2"/>
<dbReference type="UniPathway" id="UPA00056">
    <property type="reaction ID" value="UER00096"/>
</dbReference>
<dbReference type="Proteomes" id="UP000001973">
    <property type="component" value="Chromosome"/>
</dbReference>
<dbReference type="GO" id="GO:0051539">
    <property type="term" value="F:4 iron, 4 sulfur cluster binding"/>
    <property type="evidence" value="ECO:0007669"/>
    <property type="project" value="UniProtKB-UniRule"/>
</dbReference>
<dbReference type="GO" id="GO:0046429">
    <property type="term" value="F:4-hydroxy-3-methylbut-2-en-1-yl diphosphate synthase activity (ferredoxin)"/>
    <property type="evidence" value="ECO:0000318"/>
    <property type="project" value="GO_Central"/>
</dbReference>
<dbReference type="GO" id="GO:0141197">
    <property type="term" value="F:4-hydroxy-3-methylbut-2-enyl-diphosphate synthase activity (flavodoxin)"/>
    <property type="evidence" value="ECO:0007669"/>
    <property type="project" value="UniProtKB-EC"/>
</dbReference>
<dbReference type="GO" id="GO:0005506">
    <property type="term" value="F:iron ion binding"/>
    <property type="evidence" value="ECO:0007669"/>
    <property type="project" value="InterPro"/>
</dbReference>
<dbReference type="GO" id="GO:0019288">
    <property type="term" value="P:isopentenyl diphosphate biosynthetic process, methylerythritol 4-phosphate pathway"/>
    <property type="evidence" value="ECO:0000318"/>
    <property type="project" value="GO_Central"/>
</dbReference>
<dbReference type="GO" id="GO:0016114">
    <property type="term" value="P:terpenoid biosynthetic process"/>
    <property type="evidence" value="ECO:0007669"/>
    <property type="project" value="InterPro"/>
</dbReference>
<dbReference type="FunFam" id="3.20.20.20:FF:000003">
    <property type="entry name" value="4-hydroxy-3-methylbut-2-en-1-yl diphosphate synthase (flavodoxin)"/>
    <property type="match status" value="1"/>
</dbReference>
<dbReference type="FunFam" id="3.30.413.10:FF:000001">
    <property type="entry name" value="4-hydroxy-3-methylbut-2-en-1-yl diphosphate synthase (flavodoxin)"/>
    <property type="match status" value="1"/>
</dbReference>
<dbReference type="Gene3D" id="3.20.20.20">
    <property type="entry name" value="Dihydropteroate synthase-like"/>
    <property type="match status" value="1"/>
</dbReference>
<dbReference type="Gene3D" id="3.30.413.10">
    <property type="entry name" value="Sulfite Reductase Hemoprotein, domain 1"/>
    <property type="match status" value="1"/>
</dbReference>
<dbReference type="HAMAP" id="MF_00159">
    <property type="entry name" value="IspG"/>
    <property type="match status" value="1"/>
</dbReference>
<dbReference type="InterPro" id="IPR011005">
    <property type="entry name" value="Dihydropteroate_synth-like_sf"/>
</dbReference>
<dbReference type="InterPro" id="IPR016425">
    <property type="entry name" value="IspG_bac"/>
</dbReference>
<dbReference type="InterPro" id="IPR004588">
    <property type="entry name" value="IspG_bac-typ"/>
</dbReference>
<dbReference type="InterPro" id="IPR045854">
    <property type="entry name" value="NO2/SO3_Rdtase_4Fe4S_sf"/>
</dbReference>
<dbReference type="NCBIfam" id="TIGR00612">
    <property type="entry name" value="ispG_gcpE"/>
    <property type="match status" value="1"/>
</dbReference>
<dbReference type="NCBIfam" id="NF001540">
    <property type="entry name" value="PRK00366.1"/>
    <property type="match status" value="1"/>
</dbReference>
<dbReference type="PANTHER" id="PTHR30454">
    <property type="entry name" value="4-HYDROXY-3-METHYLBUT-2-EN-1-YL DIPHOSPHATE SYNTHASE"/>
    <property type="match status" value="1"/>
</dbReference>
<dbReference type="PANTHER" id="PTHR30454:SF0">
    <property type="entry name" value="4-HYDROXY-3-METHYLBUT-2-EN-1-YL DIPHOSPHATE SYNTHASE (FERREDOXIN), CHLOROPLASTIC"/>
    <property type="match status" value="1"/>
</dbReference>
<dbReference type="Pfam" id="PF04551">
    <property type="entry name" value="GcpE"/>
    <property type="match status" value="1"/>
</dbReference>
<dbReference type="PIRSF" id="PIRSF004640">
    <property type="entry name" value="IspG"/>
    <property type="match status" value="1"/>
</dbReference>
<dbReference type="SUPFAM" id="SSF51717">
    <property type="entry name" value="Dihydropteroate synthetase-like"/>
    <property type="match status" value="1"/>
</dbReference>
<dbReference type="SUPFAM" id="SSF56014">
    <property type="entry name" value="Nitrite and sulphite reductase 4Fe-4S domain-like"/>
    <property type="match status" value="1"/>
</dbReference>
<sequence length="384" mass="40594">MTAIPLGLPGVPVRPIAERRVSRRIQVGPVAVGGGAPVSVQSMTTTRTSDIGATLQQIAELTASGCQIVRVACPTQDDADALPVIARKSQIPVIADIHFQPKYVFAAIEAGCAAVRVNPGNIKQFDDKVKEIAKAAKDHGTPIRIGVNAGSLDRRLLQKYGRATPEALAESALWEASLFEEHDFRDIKISVKHNDPVVMVEAYRQLAAQCDYPLHLGVTEAGPAFQGTIKSAVAFGALLSQGIGDTIRVSLSTPPVEEIKVGIQILESLNLRQRGLEIVSCPSCGRAQVDVYKLAEEVTAGLEGMEVPLRVAVMGCVVNGPGEAREADLGVASGNGKGQIFVKGEVVKTVPESKIVETLIEEAMRIAEQMEKDGASGAPAVTVS</sequence>
<protein>
    <recommendedName>
        <fullName evidence="1">4-hydroxy-3-methylbut-2-en-1-yl diphosphate synthase (flavodoxin) 1</fullName>
        <ecNumber evidence="1">1.17.7.3</ecNumber>
    </recommendedName>
    <alternativeName>
        <fullName evidence="1">1-hydroxy-2-methyl-2-(E)-butenyl 4-diphosphate synthase 1</fullName>
    </alternativeName>
</protein>
<keyword id="KW-0004">4Fe-4S</keyword>
<keyword id="KW-0408">Iron</keyword>
<keyword id="KW-0411">Iron-sulfur</keyword>
<keyword id="KW-0414">Isoprene biosynthesis</keyword>
<keyword id="KW-0479">Metal-binding</keyword>
<keyword id="KW-0560">Oxidoreductase</keyword>
<keyword id="KW-1185">Reference proteome</keyword>
<name>ISPG1_STRCO</name>
<feature type="chain" id="PRO_0000190635" description="4-hydroxy-3-methylbut-2-en-1-yl diphosphate synthase (flavodoxin) 1">
    <location>
        <begin position="1"/>
        <end position="384"/>
    </location>
</feature>
<feature type="binding site" evidence="1">
    <location>
        <position position="281"/>
    </location>
    <ligand>
        <name>[4Fe-4S] cluster</name>
        <dbReference type="ChEBI" id="CHEBI:49883"/>
    </ligand>
</feature>
<feature type="binding site" evidence="1">
    <location>
        <position position="284"/>
    </location>
    <ligand>
        <name>[4Fe-4S] cluster</name>
        <dbReference type="ChEBI" id="CHEBI:49883"/>
    </ligand>
</feature>
<feature type="binding site" evidence="1">
    <location>
        <position position="316"/>
    </location>
    <ligand>
        <name>[4Fe-4S] cluster</name>
        <dbReference type="ChEBI" id="CHEBI:49883"/>
    </ligand>
</feature>
<feature type="binding site" evidence="1">
    <location>
        <position position="323"/>
    </location>
    <ligand>
        <name>[4Fe-4S] cluster</name>
        <dbReference type="ChEBI" id="CHEBI:49883"/>
    </ligand>
</feature>
<evidence type="ECO:0000255" key="1">
    <source>
        <dbReference type="HAMAP-Rule" id="MF_00159"/>
    </source>
</evidence>
<accession>Q9X7W2</accession>
<gene>
    <name evidence="1" type="primary">ispG1</name>
    <name type="synonym">gcpE</name>
    <name type="synonym">ispG</name>
    <name type="ordered locus">SCO6767</name>
    <name type="ORF">SC6A5.16</name>
</gene>